<accession>Q58DH1</accession>
<accession>Q05B53</accession>
<organism>
    <name type="scientific">Bos taurus</name>
    <name type="common">Bovine</name>
    <dbReference type="NCBI Taxonomy" id="9913"/>
    <lineage>
        <taxon>Eukaryota</taxon>
        <taxon>Metazoa</taxon>
        <taxon>Chordata</taxon>
        <taxon>Craniata</taxon>
        <taxon>Vertebrata</taxon>
        <taxon>Euteleostomi</taxon>
        <taxon>Mammalia</taxon>
        <taxon>Eutheria</taxon>
        <taxon>Laurasiatheria</taxon>
        <taxon>Artiodactyla</taxon>
        <taxon>Ruminantia</taxon>
        <taxon>Pecora</taxon>
        <taxon>Bovidae</taxon>
        <taxon>Bovinae</taxon>
        <taxon>Bos</taxon>
    </lineage>
</organism>
<proteinExistence type="evidence at transcript level"/>
<protein>
    <recommendedName>
        <fullName>XIAP-associated factor 1</fullName>
    </recommendedName>
</protein>
<keyword id="KW-0025">Alternative splicing</keyword>
<keyword id="KW-0053">Apoptosis</keyword>
<keyword id="KW-0963">Cytoplasm</keyword>
<keyword id="KW-0479">Metal-binding</keyword>
<keyword id="KW-0496">Mitochondrion</keyword>
<keyword id="KW-0539">Nucleus</keyword>
<keyword id="KW-1185">Reference proteome</keyword>
<keyword id="KW-0043">Tumor suppressor</keyword>
<keyword id="KW-0862">Zinc</keyword>
<keyword id="KW-0863">Zinc-finger</keyword>
<reference key="1">
    <citation type="journal article" date="2005" name="BMC Genomics">
        <title>Characterization of 954 bovine full-CDS cDNA sequences.</title>
        <authorList>
            <person name="Harhay G.P."/>
            <person name="Sonstegard T.S."/>
            <person name="Keele J.W."/>
            <person name="Heaton M.P."/>
            <person name="Clawson M.L."/>
            <person name="Snelling W.M."/>
            <person name="Wiedmann R.T."/>
            <person name="Van Tassell C.P."/>
            <person name="Smith T.P.L."/>
        </authorList>
    </citation>
    <scope>NUCLEOTIDE SEQUENCE [LARGE SCALE MRNA] (ISOFORM 2)</scope>
</reference>
<reference key="2">
    <citation type="submission" date="2006-08" db="EMBL/GenBank/DDBJ databases">
        <authorList>
            <consortium name="NIH - Mammalian Gene Collection (MGC) project"/>
        </authorList>
    </citation>
    <scope>NUCLEOTIDE SEQUENCE [LARGE SCALE MRNA] (ISOFORM 1)</scope>
    <source>
        <strain>Hereford</strain>
        <tissue>Hypothalamus</tissue>
    </source>
</reference>
<gene>
    <name type="primary">XAF1</name>
</gene>
<name>XAF1_BOVIN</name>
<comment type="function">
    <text evidence="1">Seems to function as a negative regulator of members of the IAP (inhibitor of apoptosis protein) family. Inhibits anti-caspase activity of BIRC4. Induces cleavage and inactivation of BIRC4 independent of caspase activation. Mediates TNF-alpha-induced apoptosis and is involved in apoptosis in trophoblast cells. May inhibit BIRC4 indirectly by activating the mitochondrial apoptosis pathway. After translocation to mitochondria, promotes translocation of BAX to mitochondria and cytochrome c release from mitochondria. Seems to promote the redistribution of BIRC4 from the cytoplasm to the nucleus, probably independent of BIRC4 inactivation which seems to occur in the cytoplasm. The BIRC4-XAF1 complex mediates down-regulation of BIRC5/survivin; the process requires the E3 ligase activity of BIRC4. Seems to be involved in cellular sensitivity to the proapoptotic actions of TRAIL. May be a tumor suppressor by mediating apoptosis resistance of cancer cells (By similarity).</text>
</comment>
<comment type="subunit">
    <text evidence="1">Interacts with BIRC1, BIRC2, BIRC3, BIRC4, BIRC7 and BIRC8. Part of an complex consisting of BIRC4, XAF1 and BIRC5; the complex formation requires IFN-beta stimulation. Interacts with RNF114, the interaction increases XAF1 stability and proapoptotic effects, and may regulate IFN signaling (By similarity).</text>
</comment>
<comment type="subcellular location">
    <subcellularLocation>
        <location evidence="1">Cytoplasm</location>
    </subcellularLocation>
    <subcellularLocation>
        <location evidence="1">Nucleus</location>
    </subcellularLocation>
    <subcellularLocation>
        <location evidence="1">Mitochondrion</location>
    </subcellularLocation>
</comment>
<comment type="alternative products">
    <event type="alternative splicing"/>
    <isoform>
        <id>Q58DH1-1</id>
        <name>1</name>
        <sequence type="displayed"/>
    </isoform>
    <isoform>
        <id>Q58DH1-2</id>
        <name>2</name>
        <sequence type="described" ref="VSP_032917"/>
    </isoform>
</comment>
<evidence type="ECO:0000250" key="1"/>
<evidence type="ECO:0000256" key="2">
    <source>
        <dbReference type="SAM" id="MobiDB-lite"/>
    </source>
</evidence>
<evidence type="ECO:0000303" key="3">
    <source>
    </source>
</evidence>
<evidence type="ECO:0000305" key="4"/>
<sequence>MEGALQVCRNCKRRVASNHLGLHEAHCLMYLVLCPECKEPVLQHEMEEHCQGGHQQVGCAMCQQSVPKHSLDSHEAQECQERPVECQFCQLAVRLNKVDLHEHHCGQQTELCPDCGQHVMLRVLARHREECQREQLRLQKGKSIPVPESNICCHYCNQMIPGNKYFHHLDRCRRVSGAVTPSPVGKPEIPPSSPLSWAAEDQTSKAEKDVRPKLKNRHRAPFLSEKSTRQAPRGTNKTTNLSLKSNGKLRASSPVEDETAYDILRRCSQCDILLPLPTLNHHQEKCRRLASSKGKQV</sequence>
<dbReference type="EMBL" id="BT021626">
    <property type="protein sequence ID" value="AAX46473.1"/>
    <property type="molecule type" value="mRNA"/>
</dbReference>
<dbReference type="EMBL" id="BC122801">
    <property type="protein sequence ID" value="AAI22802.1"/>
    <property type="molecule type" value="mRNA"/>
</dbReference>
<dbReference type="RefSeq" id="NP_001030247.1">
    <molecule id="Q58DH1-2"/>
    <property type="nucleotide sequence ID" value="NM_001035075.1"/>
</dbReference>
<dbReference type="RefSeq" id="XP_005220269.1">
    <property type="nucleotide sequence ID" value="XM_005220212.2"/>
</dbReference>
<dbReference type="FunCoup" id="Q58DH1">
    <property type="interactions" value="51"/>
</dbReference>
<dbReference type="STRING" id="9913.ENSBTAP00000059031"/>
<dbReference type="PaxDb" id="9913-ENSBTAP00000015077"/>
<dbReference type="GeneID" id="509740"/>
<dbReference type="KEGG" id="bta:509740"/>
<dbReference type="CTD" id="54739"/>
<dbReference type="eggNOG" id="ENOG502QQRU">
    <property type="taxonomic scope" value="Eukaryota"/>
</dbReference>
<dbReference type="HOGENOM" id="CLU_066148_0_0_1"/>
<dbReference type="InParanoid" id="Q58DH1"/>
<dbReference type="OrthoDB" id="422728at2759"/>
<dbReference type="Proteomes" id="UP000009136">
    <property type="component" value="Unplaced"/>
</dbReference>
<dbReference type="GO" id="GO:0005739">
    <property type="term" value="C:mitochondrion"/>
    <property type="evidence" value="ECO:0000318"/>
    <property type="project" value="GO_Central"/>
</dbReference>
<dbReference type="GO" id="GO:0005634">
    <property type="term" value="C:nucleus"/>
    <property type="evidence" value="ECO:0007669"/>
    <property type="project" value="UniProtKB-SubCell"/>
</dbReference>
<dbReference type="GO" id="GO:0008270">
    <property type="term" value="F:zinc ion binding"/>
    <property type="evidence" value="ECO:0007669"/>
    <property type="project" value="UniProtKB-KW"/>
</dbReference>
<dbReference type="GO" id="GO:0006915">
    <property type="term" value="P:apoptotic process"/>
    <property type="evidence" value="ECO:0007669"/>
    <property type="project" value="UniProtKB-KW"/>
</dbReference>
<dbReference type="Gene3D" id="6.10.250.1730">
    <property type="match status" value="1"/>
</dbReference>
<dbReference type="Gene3D" id="3.30.40.10">
    <property type="entry name" value="Zinc/RING finger domain, C3HC4 (zinc finger)"/>
    <property type="match status" value="3"/>
</dbReference>
<dbReference type="InterPro" id="IPR051986">
    <property type="entry name" value="Innate_Immune_Apopt_Reg"/>
</dbReference>
<dbReference type="InterPro" id="IPR049439">
    <property type="entry name" value="TRAFD1-XIAF1_Znf"/>
</dbReference>
<dbReference type="InterPro" id="IPR041386">
    <property type="entry name" value="XAF1_C"/>
</dbReference>
<dbReference type="InterPro" id="IPR031220">
    <property type="entry name" value="XAF1_C_sf"/>
</dbReference>
<dbReference type="InterPro" id="IPR013083">
    <property type="entry name" value="Znf_RING/FYVE/PHD"/>
</dbReference>
<dbReference type="PANTHER" id="PTHR16295">
    <property type="entry name" value="TRAF-TYPE ZINC FINGER PROTEIN-RELATED"/>
    <property type="match status" value="1"/>
</dbReference>
<dbReference type="PANTHER" id="PTHR16295:SF17">
    <property type="entry name" value="XIAP-ASSOCIATED FACTOR 1"/>
    <property type="match status" value="1"/>
</dbReference>
<dbReference type="Pfam" id="PF21366">
    <property type="entry name" value="TRAFD1-XIAF1_ZnF"/>
    <property type="match status" value="1"/>
</dbReference>
<dbReference type="Pfam" id="PF18608">
    <property type="entry name" value="XAF1_C"/>
    <property type="match status" value="1"/>
</dbReference>
<feature type="chain" id="PRO_0000329027" description="XIAP-associated factor 1">
    <location>
        <begin position="1"/>
        <end position="297"/>
    </location>
</feature>
<feature type="zinc finger region" description="TRAF-type">
    <location>
        <begin position="22"/>
        <end position="99"/>
    </location>
</feature>
<feature type="region of interest" description="Disordered" evidence="2">
    <location>
        <begin position="178"/>
        <end position="255"/>
    </location>
</feature>
<feature type="compositionally biased region" description="Basic and acidic residues" evidence="2">
    <location>
        <begin position="202"/>
        <end position="212"/>
    </location>
</feature>
<feature type="compositionally biased region" description="Polar residues" evidence="2">
    <location>
        <begin position="229"/>
        <end position="245"/>
    </location>
</feature>
<feature type="splice variant" id="VSP_032917" description="In isoform 2." evidence="3">
    <original>EKCRRLASSKGKQV</original>
    <variation>RCWFAQELQLNQEEKRTPTLLPENSDQASRPNPAWTPWEIQLYL</variation>
    <location>
        <begin position="284"/>
        <end position="297"/>
    </location>
</feature>
<feature type="sequence conflict" description="In Ref. 2; AAI22802." evidence="4" ref="2">
    <original>H</original>
    <variation>Y</variation>
    <location>
        <position position="26"/>
    </location>
</feature>
<feature type="sequence conflict" description="In Ref. 2; AAI22802." evidence="4" ref="2">
    <original>D</original>
    <variation>E</variation>
    <location>
        <position position="72"/>
    </location>
</feature>
<feature type="sequence conflict" description="In Ref. 2; AAI22802." evidence="4" ref="2">
    <original>E</original>
    <variation>K</variation>
    <location>
        <position position="130"/>
    </location>
</feature>